<organism>
    <name type="scientific">Prochlorococcus marinus (strain NATL2A)</name>
    <dbReference type="NCBI Taxonomy" id="59920"/>
    <lineage>
        <taxon>Bacteria</taxon>
        <taxon>Bacillati</taxon>
        <taxon>Cyanobacteriota</taxon>
        <taxon>Cyanophyceae</taxon>
        <taxon>Synechococcales</taxon>
        <taxon>Prochlorococcaceae</taxon>
        <taxon>Prochlorococcus</taxon>
    </lineage>
</organism>
<protein>
    <recommendedName>
        <fullName evidence="1">Argininosuccinate synthase</fullName>
        <ecNumber evidence="1">6.3.4.5</ecNumber>
    </recommendedName>
    <alternativeName>
        <fullName evidence="1">Citrulline--aspartate ligase</fullName>
    </alternativeName>
</protein>
<gene>
    <name evidence="1" type="primary">argG</name>
    <name type="ordered locus">PMN2A_1317</name>
</gene>
<sequence length="400" mass="44116">MGKANKVVLAYSGGVDTSVCIPYLKEEYGVEHVIAFAADLGQGDELDEIKKKAISAGASQSLIGNLVKPFIEDFAFPAIRSNALYQGRYPLSTALARPLIAKKLVEIARELNADGVAHGCTGKGNDQVRFDVTIGALAPDLQLLTPAREWGMSREETIAYGEKYGIVPPVSKKNPYSIDLNLLGRSIEAGPLEDPFQMPSEEVFGITSSIADSPNEPEIADILFENGYPVAINGEEMEPVSLIKKANSLAGKHGFGRLDIIEDRVVGIKSREIYETPGLLLLIKAHQEIESLTLPADLLDTKSRLERQWADLVYKGFWFSPLKEALDGFINYSQKQVNGTVRVRLFKGNVDVIGRKSKENSLYISDMSTYGSEDKFNHKSAEGFIYVWGLPSRIWSWINK</sequence>
<evidence type="ECO:0000255" key="1">
    <source>
        <dbReference type="HAMAP-Rule" id="MF_00005"/>
    </source>
</evidence>
<reference key="1">
    <citation type="journal article" date="2007" name="PLoS Genet.">
        <title>Patterns and implications of gene gain and loss in the evolution of Prochlorococcus.</title>
        <authorList>
            <person name="Kettler G.C."/>
            <person name="Martiny A.C."/>
            <person name="Huang K."/>
            <person name="Zucker J."/>
            <person name="Coleman M.L."/>
            <person name="Rodrigue S."/>
            <person name="Chen F."/>
            <person name="Lapidus A."/>
            <person name="Ferriera S."/>
            <person name="Johnson J."/>
            <person name="Steglich C."/>
            <person name="Church G.M."/>
            <person name="Richardson P."/>
            <person name="Chisholm S.W."/>
        </authorList>
    </citation>
    <scope>NUCLEOTIDE SEQUENCE [LARGE SCALE GENOMIC DNA]</scope>
    <source>
        <strain>NATL2A</strain>
    </source>
</reference>
<proteinExistence type="inferred from homology"/>
<accession>Q46I72</accession>
<feature type="chain" id="PRO_0000263951" description="Argininosuccinate synthase">
    <location>
        <begin position="1"/>
        <end position="400"/>
    </location>
</feature>
<feature type="binding site" evidence="1">
    <location>
        <begin position="10"/>
        <end position="18"/>
    </location>
    <ligand>
        <name>ATP</name>
        <dbReference type="ChEBI" id="CHEBI:30616"/>
    </ligand>
</feature>
<feature type="binding site" evidence="1">
    <location>
        <position position="38"/>
    </location>
    <ligand>
        <name>ATP</name>
        <dbReference type="ChEBI" id="CHEBI:30616"/>
    </ligand>
</feature>
<feature type="binding site" evidence="1">
    <location>
        <position position="89"/>
    </location>
    <ligand>
        <name>L-citrulline</name>
        <dbReference type="ChEBI" id="CHEBI:57743"/>
    </ligand>
</feature>
<feature type="binding site" evidence="1">
    <location>
        <position position="119"/>
    </location>
    <ligand>
        <name>ATP</name>
        <dbReference type="ChEBI" id="CHEBI:30616"/>
    </ligand>
</feature>
<feature type="binding site" evidence="1">
    <location>
        <position position="121"/>
    </location>
    <ligand>
        <name>L-aspartate</name>
        <dbReference type="ChEBI" id="CHEBI:29991"/>
    </ligand>
</feature>
<feature type="binding site" evidence="1">
    <location>
        <position position="125"/>
    </location>
    <ligand>
        <name>L-aspartate</name>
        <dbReference type="ChEBI" id="CHEBI:29991"/>
    </ligand>
</feature>
<feature type="binding site" evidence="1">
    <location>
        <position position="125"/>
    </location>
    <ligand>
        <name>L-citrulline</name>
        <dbReference type="ChEBI" id="CHEBI:57743"/>
    </ligand>
</feature>
<feature type="binding site" evidence="1">
    <location>
        <position position="126"/>
    </location>
    <ligand>
        <name>L-aspartate</name>
        <dbReference type="ChEBI" id="CHEBI:29991"/>
    </ligand>
</feature>
<feature type="binding site" evidence="1">
    <location>
        <position position="129"/>
    </location>
    <ligand>
        <name>L-citrulline</name>
        <dbReference type="ChEBI" id="CHEBI:57743"/>
    </ligand>
</feature>
<feature type="binding site" evidence="1">
    <location>
        <position position="177"/>
    </location>
    <ligand>
        <name>L-citrulline</name>
        <dbReference type="ChEBI" id="CHEBI:57743"/>
    </ligand>
</feature>
<feature type="binding site" evidence="1">
    <location>
        <position position="186"/>
    </location>
    <ligand>
        <name>L-citrulline</name>
        <dbReference type="ChEBI" id="CHEBI:57743"/>
    </ligand>
</feature>
<feature type="binding site" evidence="1">
    <location>
        <position position="262"/>
    </location>
    <ligand>
        <name>L-citrulline</name>
        <dbReference type="ChEBI" id="CHEBI:57743"/>
    </ligand>
</feature>
<feature type="binding site" evidence="1">
    <location>
        <position position="274"/>
    </location>
    <ligand>
        <name>L-citrulline</name>
        <dbReference type="ChEBI" id="CHEBI:57743"/>
    </ligand>
</feature>
<name>ASSY_PROMT</name>
<keyword id="KW-0028">Amino-acid biosynthesis</keyword>
<keyword id="KW-0055">Arginine biosynthesis</keyword>
<keyword id="KW-0067">ATP-binding</keyword>
<keyword id="KW-0963">Cytoplasm</keyword>
<keyword id="KW-0436">Ligase</keyword>
<keyword id="KW-0547">Nucleotide-binding</keyword>
<keyword id="KW-1185">Reference proteome</keyword>
<dbReference type="EC" id="6.3.4.5" evidence="1"/>
<dbReference type="EMBL" id="CP000095">
    <property type="protein sequence ID" value="AAZ58806.1"/>
    <property type="molecule type" value="Genomic_DNA"/>
</dbReference>
<dbReference type="RefSeq" id="WP_011295660.1">
    <property type="nucleotide sequence ID" value="NC_007335.2"/>
</dbReference>
<dbReference type="SMR" id="Q46I72"/>
<dbReference type="STRING" id="59920.PMN2A_1317"/>
<dbReference type="KEGG" id="pmn:PMN2A_1317"/>
<dbReference type="HOGENOM" id="CLU_032784_4_2_3"/>
<dbReference type="OrthoDB" id="9801641at2"/>
<dbReference type="PhylomeDB" id="Q46I72"/>
<dbReference type="UniPathway" id="UPA00068">
    <property type="reaction ID" value="UER00113"/>
</dbReference>
<dbReference type="Proteomes" id="UP000002535">
    <property type="component" value="Chromosome"/>
</dbReference>
<dbReference type="GO" id="GO:0005737">
    <property type="term" value="C:cytoplasm"/>
    <property type="evidence" value="ECO:0007669"/>
    <property type="project" value="UniProtKB-SubCell"/>
</dbReference>
<dbReference type="GO" id="GO:0004055">
    <property type="term" value="F:argininosuccinate synthase activity"/>
    <property type="evidence" value="ECO:0007669"/>
    <property type="project" value="UniProtKB-UniRule"/>
</dbReference>
<dbReference type="GO" id="GO:0005524">
    <property type="term" value="F:ATP binding"/>
    <property type="evidence" value="ECO:0007669"/>
    <property type="project" value="UniProtKB-UniRule"/>
</dbReference>
<dbReference type="GO" id="GO:0000053">
    <property type="term" value="P:argininosuccinate metabolic process"/>
    <property type="evidence" value="ECO:0007669"/>
    <property type="project" value="TreeGrafter"/>
</dbReference>
<dbReference type="GO" id="GO:0006526">
    <property type="term" value="P:L-arginine biosynthetic process"/>
    <property type="evidence" value="ECO:0007669"/>
    <property type="project" value="UniProtKB-UniRule"/>
</dbReference>
<dbReference type="GO" id="GO:0000050">
    <property type="term" value="P:urea cycle"/>
    <property type="evidence" value="ECO:0007669"/>
    <property type="project" value="TreeGrafter"/>
</dbReference>
<dbReference type="CDD" id="cd01999">
    <property type="entry name" value="ASS"/>
    <property type="match status" value="1"/>
</dbReference>
<dbReference type="FunFam" id="3.40.50.620:FF:000019">
    <property type="entry name" value="Argininosuccinate synthase"/>
    <property type="match status" value="1"/>
</dbReference>
<dbReference type="FunFam" id="3.90.1260.10:FF:000007">
    <property type="entry name" value="Argininosuccinate synthase"/>
    <property type="match status" value="1"/>
</dbReference>
<dbReference type="Gene3D" id="3.90.1260.10">
    <property type="entry name" value="Argininosuccinate synthetase, chain A, domain 2"/>
    <property type="match status" value="1"/>
</dbReference>
<dbReference type="Gene3D" id="3.40.50.620">
    <property type="entry name" value="HUPs"/>
    <property type="match status" value="1"/>
</dbReference>
<dbReference type="Gene3D" id="1.20.5.470">
    <property type="entry name" value="Single helix bin"/>
    <property type="match status" value="1"/>
</dbReference>
<dbReference type="HAMAP" id="MF_00005">
    <property type="entry name" value="Arg_succ_synth_type1"/>
    <property type="match status" value="1"/>
</dbReference>
<dbReference type="InterPro" id="IPR048268">
    <property type="entry name" value="Arginosuc_syn_C"/>
</dbReference>
<dbReference type="InterPro" id="IPR048267">
    <property type="entry name" value="Arginosuc_syn_N"/>
</dbReference>
<dbReference type="InterPro" id="IPR001518">
    <property type="entry name" value="Arginosuc_synth"/>
</dbReference>
<dbReference type="InterPro" id="IPR018223">
    <property type="entry name" value="Arginosuc_synth_CS"/>
</dbReference>
<dbReference type="InterPro" id="IPR023434">
    <property type="entry name" value="Arginosuc_synth_type_1_subfam"/>
</dbReference>
<dbReference type="InterPro" id="IPR024074">
    <property type="entry name" value="AS_cat/multimer_dom_body"/>
</dbReference>
<dbReference type="InterPro" id="IPR014729">
    <property type="entry name" value="Rossmann-like_a/b/a_fold"/>
</dbReference>
<dbReference type="NCBIfam" id="TIGR00032">
    <property type="entry name" value="argG"/>
    <property type="match status" value="1"/>
</dbReference>
<dbReference type="NCBIfam" id="NF001770">
    <property type="entry name" value="PRK00509.1"/>
    <property type="match status" value="1"/>
</dbReference>
<dbReference type="PANTHER" id="PTHR11587">
    <property type="entry name" value="ARGININOSUCCINATE SYNTHASE"/>
    <property type="match status" value="1"/>
</dbReference>
<dbReference type="PANTHER" id="PTHR11587:SF2">
    <property type="entry name" value="ARGININOSUCCINATE SYNTHASE"/>
    <property type="match status" value="1"/>
</dbReference>
<dbReference type="Pfam" id="PF20979">
    <property type="entry name" value="Arginosuc_syn_C"/>
    <property type="match status" value="1"/>
</dbReference>
<dbReference type="Pfam" id="PF00764">
    <property type="entry name" value="Arginosuc_synth"/>
    <property type="match status" value="1"/>
</dbReference>
<dbReference type="SUPFAM" id="SSF52402">
    <property type="entry name" value="Adenine nucleotide alpha hydrolases-like"/>
    <property type="match status" value="1"/>
</dbReference>
<dbReference type="SUPFAM" id="SSF69864">
    <property type="entry name" value="Argininosuccinate synthetase, C-terminal domain"/>
    <property type="match status" value="1"/>
</dbReference>
<dbReference type="PROSITE" id="PS00564">
    <property type="entry name" value="ARGININOSUCCIN_SYN_1"/>
    <property type="match status" value="1"/>
</dbReference>
<dbReference type="PROSITE" id="PS00565">
    <property type="entry name" value="ARGININOSUCCIN_SYN_2"/>
    <property type="match status" value="1"/>
</dbReference>
<comment type="catalytic activity">
    <reaction evidence="1">
        <text>L-citrulline + L-aspartate + ATP = 2-(N(omega)-L-arginino)succinate + AMP + diphosphate + H(+)</text>
        <dbReference type="Rhea" id="RHEA:10932"/>
        <dbReference type="ChEBI" id="CHEBI:15378"/>
        <dbReference type="ChEBI" id="CHEBI:29991"/>
        <dbReference type="ChEBI" id="CHEBI:30616"/>
        <dbReference type="ChEBI" id="CHEBI:33019"/>
        <dbReference type="ChEBI" id="CHEBI:57472"/>
        <dbReference type="ChEBI" id="CHEBI:57743"/>
        <dbReference type="ChEBI" id="CHEBI:456215"/>
        <dbReference type="EC" id="6.3.4.5"/>
    </reaction>
</comment>
<comment type="pathway">
    <text evidence="1">Amino-acid biosynthesis; L-arginine biosynthesis; L-arginine from L-ornithine and carbamoyl phosphate: step 2/3.</text>
</comment>
<comment type="subunit">
    <text evidence="1">Homotetramer.</text>
</comment>
<comment type="subcellular location">
    <subcellularLocation>
        <location evidence="1">Cytoplasm</location>
    </subcellularLocation>
</comment>
<comment type="similarity">
    <text evidence="1">Belongs to the argininosuccinate synthase family. Type 1 subfamily.</text>
</comment>